<organism>
    <name type="scientific">Arabidopsis thaliana</name>
    <name type="common">Mouse-ear cress</name>
    <dbReference type="NCBI Taxonomy" id="3702"/>
    <lineage>
        <taxon>Eukaryota</taxon>
        <taxon>Viridiplantae</taxon>
        <taxon>Streptophyta</taxon>
        <taxon>Embryophyta</taxon>
        <taxon>Tracheophyta</taxon>
        <taxon>Spermatophyta</taxon>
        <taxon>Magnoliopsida</taxon>
        <taxon>eudicotyledons</taxon>
        <taxon>Gunneridae</taxon>
        <taxon>Pentapetalae</taxon>
        <taxon>rosids</taxon>
        <taxon>malvids</taxon>
        <taxon>Brassicales</taxon>
        <taxon>Brassicaceae</taxon>
        <taxon>Camelineae</taxon>
        <taxon>Arabidopsis</taxon>
    </lineage>
</organism>
<keyword id="KW-0963">Cytoplasm</keyword>
<keyword id="KW-1185">Reference proteome</keyword>
<dbReference type="EMBL" id="AC004392">
    <property type="protein sequence ID" value="AAC28509.1"/>
    <property type="molecule type" value="Genomic_DNA"/>
</dbReference>
<dbReference type="EMBL" id="CP002684">
    <property type="protein sequence ID" value="AEE33904.1"/>
    <property type="molecule type" value="Genomic_DNA"/>
</dbReference>
<dbReference type="EMBL" id="AK230226">
    <property type="protein sequence ID" value="BAF02031.1"/>
    <property type="molecule type" value="mRNA"/>
</dbReference>
<dbReference type="EMBL" id="BT028990">
    <property type="protein sequence ID" value="ABI93899.1"/>
    <property type="molecule type" value="mRNA"/>
</dbReference>
<dbReference type="EMBL" id="AY086990">
    <property type="protein sequence ID" value="AAM64551.1"/>
    <property type="molecule type" value="mRNA"/>
</dbReference>
<dbReference type="PIR" id="T02137">
    <property type="entry name" value="T02137"/>
</dbReference>
<dbReference type="RefSeq" id="NP_564788.1">
    <property type="nucleotide sequence ID" value="NM_104873.3"/>
</dbReference>
<dbReference type="FunCoup" id="O80698">
    <property type="interactions" value="611"/>
</dbReference>
<dbReference type="iPTMnet" id="O80698"/>
<dbReference type="PaxDb" id="3702-AT1G61930.1"/>
<dbReference type="EnsemblPlants" id="AT1G61930.1">
    <property type="protein sequence ID" value="AT1G61930.1"/>
    <property type="gene ID" value="AT1G61930"/>
</dbReference>
<dbReference type="GeneID" id="842488"/>
<dbReference type="Gramene" id="AT1G61930.1">
    <property type="protein sequence ID" value="AT1G61930.1"/>
    <property type="gene ID" value="AT1G61930"/>
</dbReference>
<dbReference type="KEGG" id="ath:AT1G61930"/>
<dbReference type="Araport" id="AT1G61930"/>
<dbReference type="TAIR" id="AT1G61930">
    <property type="gene designation" value="S40-6"/>
</dbReference>
<dbReference type="eggNOG" id="ENOG502RXVW">
    <property type="taxonomic scope" value="Eukaryota"/>
</dbReference>
<dbReference type="HOGENOM" id="CLU_088831_0_0_1"/>
<dbReference type="InParanoid" id="O80698"/>
<dbReference type="OMA" id="QYRGHEN"/>
<dbReference type="PRO" id="PR:O80698"/>
<dbReference type="Proteomes" id="UP000006548">
    <property type="component" value="Chromosome 1"/>
</dbReference>
<dbReference type="ExpressionAtlas" id="O80698">
    <property type="expression patterns" value="baseline and differential"/>
</dbReference>
<dbReference type="GO" id="GO:0005737">
    <property type="term" value="C:cytoplasm"/>
    <property type="evidence" value="ECO:0000314"/>
    <property type="project" value="UniProtKB"/>
</dbReference>
<dbReference type="GO" id="GO:0010150">
    <property type="term" value="P:leaf senescence"/>
    <property type="evidence" value="ECO:0000270"/>
    <property type="project" value="UniProtKB"/>
</dbReference>
<dbReference type="InterPro" id="IPR007608">
    <property type="entry name" value="Senescence_reg_S40"/>
</dbReference>
<dbReference type="PANTHER" id="PTHR46525">
    <property type="entry name" value="EMB|CAB72159.1"/>
    <property type="match status" value="1"/>
</dbReference>
<dbReference type="PANTHER" id="PTHR46525:SF18">
    <property type="entry name" value="SENESCENCE REGULATOR S40"/>
    <property type="match status" value="1"/>
</dbReference>
<dbReference type="Pfam" id="PF04520">
    <property type="entry name" value="Senescence_reg"/>
    <property type="match status" value="1"/>
</dbReference>
<gene>
    <name evidence="3" type="primary">S40-6</name>
    <name evidence="5" type="ordered locus">At1g61930</name>
    <name evidence="6" type="ORF">F8K4.12</name>
</gene>
<protein>
    <recommendedName>
        <fullName evidence="3">Protein S40-6</fullName>
        <shortName evidence="3">AtS40-6</shortName>
    </recommendedName>
</protein>
<evidence type="ECO:0000256" key="1">
    <source>
        <dbReference type="SAM" id="MobiDB-lite"/>
    </source>
</evidence>
<evidence type="ECO:0000269" key="2">
    <source>
    </source>
</evidence>
<evidence type="ECO:0000303" key="3">
    <source>
    </source>
</evidence>
<evidence type="ECO:0000305" key="4"/>
<evidence type="ECO:0000312" key="5">
    <source>
        <dbReference type="Araport" id="AT1G61930"/>
    </source>
</evidence>
<evidence type="ECO:0000312" key="6">
    <source>
        <dbReference type="EMBL" id="AAC28509.1"/>
    </source>
</evidence>
<feature type="chain" id="PRO_0000457294" description="Protein S40-6">
    <location>
        <begin position="1"/>
        <end position="203"/>
    </location>
</feature>
<feature type="region of interest" description="Disordered" evidence="1">
    <location>
        <begin position="1"/>
        <end position="33"/>
    </location>
</feature>
<feature type="sequence conflict" description="In Ref. 5; AAM64551." evidence="4" ref="5">
    <original>S</original>
    <variation>L</variation>
    <location>
        <position position="89"/>
    </location>
</feature>
<reference key="1">
    <citation type="journal article" date="2000" name="Nature">
        <title>Sequence and analysis of chromosome 1 of the plant Arabidopsis thaliana.</title>
        <authorList>
            <person name="Theologis A."/>
            <person name="Ecker J.R."/>
            <person name="Palm C.J."/>
            <person name="Federspiel N.A."/>
            <person name="Kaul S."/>
            <person name="White O."/>
            <person name="Alonso J."/>
            <person name="Altafi H."/>
            <person name="Araujo R."/>
            <person name="Bowman C.L."/>
            <person name="Brooks S.Y."/>
            <person name="Buehler E."/>
            <person name="Chan A."/>
            <person name="Chao Q."/>
            <person name="Chen H."/>
            <person name="Cheuk R.F."/>
            <person name="Chin C.W."/>
            <person name="Chung M.K."/>
            <person name="Conn L."/>
            <person name="Conway A.B."/>
            <person name="Conway A.R."/>
            <person name="Creasy T.H."/>
            <person name="Dewar K."/>
            <person name="Dunn P."/>
            <person name="Etgu P."/>
            <person name="Feldblyum T.V."/>
            <person name="Feng J.-D."/>
            <person name="Fong B."/>
            <person name="Fujii C.Y."/>
            <person name="Gill J.E."/>
            <person name="Goldsmith A.D."/>
            <person name="Haas B."/>
            <person name="Hansen N.F."/>
            <person name="Hughes B."/>
            <person name="Huizar L."/>
            <person name="Hunter J.L."/>
            <person name="Jenkins J."/>
            <person name="Johnson-Hopson C."/>
            <person name="Khan S."/>
            <person name="Khaykin E."/>
            <person name="Kim C.J."/>
            <person name="Koo H.L."/>
            <person name="Kremenetskaia I."/>
            <person name="Kurtz D.B."/>
            <person name="Kwan A."/>
            <person name="Lam B."/>
            <person name="Langin-Hooper S."/>
            <person name="Lee A."/>
            <person name="Lee J.M."/>
            <person name="Lenz C.A."/>
            <person name="Li J.H."/>
            <person name="Li Y.-P."/>
            <person name="Lin X."/>
            <person name="Liu S.X."/>
            <person name="Liu Z.A."/>
            <person name="Luros J.S."/>
            <person name="Maiti R."/>
            <person name="Marziali A."/>
            <person name="Militscher J."/>
            <person name="Miranda M."/>
            <person name="Nguyen M."/>
            <person name="Nierman W.C."/>
            <person name="Osborne B.I."/>
            <person name="Pai G."/>
            <person name="Peterson J."/>
            <person name="Pham P.K."/>
            <person name="Rizzo M."/>
            <person name="Rooney T."/>
            <person name="Rowley D."/>
            <person name="Sakano H."/>
            <person name="Salzberg S.L."/>
            <person name="Schwartz J.R."/>
            <person name="Shinn P."/>
            <person name="Southwick A.M."/>
            <person name="Sun H."/>
            <person name="Tallon L.J."/>
            <person name="Tambunga G."/>
            <person name="Toriumi M.J."/>
            <person name="Town C.D."/>
            <person name="Utterback T."/>
            <person name="Van Aken S."/>
            <person name="Vaysberg M."/>
            <person name="Vysotskaia V.S."/>
            <person name="Walker M."/>
            <person name="Wu D."/>
            <person name="Yu G."/>
            <person name="Fraser C.M."/>
            <person name="Venter J.C."/>
            <person name="Davis R.W."/>
        </authorList>
    </citation>
    <scope>NUCLEOTIDE SEQUENCE [LARGE SCALE GENOMIC DNA]</scope>
    <source>
        <strain>cv. Columbia</strain>
    </source>
</reference>
<reference key="2">
    <citation type="journal article" date="2017" name="Plant J.">
        <title>Araport11: a complete reannotation of the Arabidopsis thaliana reference genome.</title>
        <authorList>
            <person name="Cheng C.Y."/>
            <person name="Krishnakumar V."/>
            <person name="Chan A.P."/>
            <person name="Thibaud-Nissen F."/>
            <person name="Schobel S."/>
            <person name="Town C.D."/>
        </authorList>
    </citation>
    <scope>GENOME REANNOTATION</scope>
    <source>
        <strain>cv. Columbia</strain>
    </source>
</reference>
<reference key="3">
    <citation type="submission" date="2006-07" db="EMBL/GenBank/DDBJ databases">
        <title>Large-scale analysis of RIKEN Arabidopsis full-length (RAFL) cDNAs.</title>
        <authorList>
            <person name="Totoki Y."/>
            <person name="Seki M."/>
            <person name="Ishida J."/>
            <person name="Nakajima M."/>
            <person name="Enju A."/>
            <person name="Kamiya A."/>
            <person name="Narusaka M."/>
            <person name="Shin-i T."/>
            <person name="Nakagawa M."/>
            <person name="Sakamoto N."/>
            <person name="Oishi K."/>
            <person name="Kohara Y."/>
            <person name="Kobayashi M."/>
            <person name="Toyoda A."/>
            <person name="Sakaki Y."/>
            <person name="Sakurai T."/>
            <person name="Iida K."/>
            <person name="Akiyama K."/>
            <person name="Satou M."/>
            <person name="Toyoda T."/>
            <person name="Konagaya A."/>
            <person name="Carninci P."/>
            <person name="Kawai J."/>
            <person name="Hayashizaki Y."/>
            <person name="Shinozaki K."/>
        </authorList>
    </citation>
    <scope>NUCLEOTIDE SEQUENCE [LARGE SCALE MRNA]</scope>
    <source>
        <strain>cv. Columbia</strain>
    </source>
</reference>
<reference key="4">
    <citation type="submission" date="2006-09" db="EMBL/GenBank/DDBJ databases">
        <title>Arabidopsis ORF clones.</title>
        <authorList>
            <person name="Bautista V.R."/>
            <person name="Kim C.J."/>
            <person name="Chen H."/>
            <person name="Quinitio C."/>
            <person name="Ecker J.R."/>
        </authorList>
    </citation>
    <scope>NUCLEOTIDE SEQUENCE [LARGE SCALE MRNA]</scope>
    <source>
        <strain>cv. Columbia</strain>
    </source>
</reference>
<reference key="5">
    <citation type="submission" date="2002-03" db="EMBL/GenBank/DDBJ databases">
        <title>Full-length cDNA from Arabidopsis thaliana.</title>
        <authorList>
            <person name="Brover V.V."/>
            <person name="Troukhan M.E."/>
            <person name="Alexandrov N.A."/>
            <person name="Lu Y.-P."/>
            <person name="Flavell R.B."/>
            <person name="Feldmann K.A."/>
        </authorList>
    </citation>
    <scope>NUCLEOTIDE SEQUENCE [LARGE SCALE MRNA]</scope>
</reference>
<reference key="6">
    <citation type="journal article" date="2010" name="Plant Mol. Biol.">
        <title>Nuclear targeted AtS40 modulates senescence associated gene expression in Arabidopsis thaliana during natural development and in darkness.</title>
        <authorList>
            <person name="Fischer-Kilbienski I."/>
            <person name="Miao Y."/>
            <person name="Roitsch T."/>
            <person name="Zschiesche W."/>
            <person name="Humbeck K."/>
            <person name="Krupinska K."/>
        </authorList>
    </citation>
    <scope>DEVELOPMENTAL STAGE</scope>
    <scope>SUBCELLULAR LOCATION</scope>
    <scope>GENE FAMILY</scope>
    <scope>NOMENCLATURE</scope>
    <source>
        <strain>cv. Columbia</strain>
    </source>
</reference>
<proteinExistence type="evidence at transcript level"/>
<comment type="subcellular location">
    <subcellularLocation>
        <location evidence="2">Cytoplasm</location>
    </subcellularLocation>
</comment>
<comment type="developmental stage">
    <text evidence="2">Accumulates during senescence.</text>
</comment>
<comment type="similarity">
    <text evidence="4">Belongs to the senescence regulator S40 family.</text>
</comment>
<name>S406_ARATH</name>
<accession>O80698</accession>
<accession>Q8LBU3</accession>
<sequence length="203" mass="22249">MAKGRKPTTMNRSDRYLGSYTYGDSHGNSVTDELELGEEDIWSPAVIHDDTTENEESYGTWNLRATLGKNGRVGGLSLAFEGSLVAPPSSSPMIVQKIHGGGGEGEEDRRKLASSAPVNVPDWSKIYRVDSVESIHELDDEDDEDEESGMMPPHEYLAKSQARRSRKIGGGGASVFDGVGRTLKGRELRRVRDAIWSQTGFYG</sequence>